<evidence type="ECO:0000255" key="1">
    <source>
        <dbReference type="HAMAP-Rule" id="MF_01367"/>
    </source>
</evidence>
<evidence type="ECO:0000305" key="2"/>
<gene>
    <name evidence="1" type="primary">rplN</name>
    <name type="ordered locus">Xfasm12_0504</name>
</gene>
<feature type="chain" id="PRO_1000144353" description="Large ribosomal subunit protein uL14">
    <location>
        <begin position="1"/>
        <end position="122"/>
    </location>
</feature>
<sequence>MIQMQSYLGVADNSGAKEVMCIKVLGGSKRRYASIGDIIKVTVKEAIPRGKVKKGEVYDAVVVRTRSGVRRPDGSLIRFDGNAAVLLNNKQEPIGTRVFGPVTRELRSEKLMKIVSLAPEVL</sequence>
<protein>
    <recommendedName>
        <fullName evidence="1">Large ribosomal subunit protein uL14</fullName>
    </recommendedName>
    <alternativeName>
        <fullName evidence="2">50S ribosomal protein L14</fullName>
    </alternativeName>
</protein>
<accession>B0U5K9</accession>
<organism>
    <name type="scientific">Xylella fastidiosa (strain M12)</name>
    <dbReference type="NCBI Taxonomy" id="405440"/>
    <lineage>
        <taxon>Bacteria</taxon>
        <taxon>Pseudomonadati</taxon>
        <taxon>Pseudomonadota</taxon>
        <taxon>Gammaproteobacteria</taxon>
        <taxon>Lysobacterales</taxon>
        <taxon>Lysobacteraceae</taxon>
        <taxon>Xylella</taxon>
    </lineage>
</organism>
<proteinExistence type="inferred from homology"/>
<reference key="1">
    <citation type="journal article" date="2010" name="J. Bacteriol.">
        <title>Whole genome sequences of two Xylella fastidiosa strains (M12 and M23) causing almond leaf scorch disease in California.</title>
        <authorList>
            <person name="Chen J."/>
            <person name="Xie G."/>
            <person name="Han S."/>
            <person name="Chertkov O."/>
            <person name="Sims D."/>
            <person name="Civerolo E.L."/>
        </authorList>
    </citation>
    <scope>NUCLEOTIDE SEQUENCE [LARGE SCALE GENOMIC DNA]</scope>
    <source>
        <strain>M12</strain>
    </source>
</reference>
<comment type="function">
    <text evidence="1">Binds to 23S rRNA. Forms part of two intersubunit bridges in the 70S ribosome.</text>
</comment>
<comment type="subunit">
    <text evidence="1">Part of the 50S ribosomal subunit. Forms a cluster with proteins L3 and L19. In the 70S ribosome, L14 and L19 interact and together make contacts with the 16S rRNA in bridges B5 and B8.</text>
</comment>
<comment type="similarity">
    <text evidence="1">Belongs to the universal ribosomal protein uL14 family.</text>
</comment>
<keyword id="KW-0687">Ribonucleoprotein</keyword>
<keyword id="KW-0689">Ribosomal protein</keyword>
<keyword id="KW-0694">RNA-binding</keyword>
<keyword id="KW-0699">rRNA-binding</keyword>
<dbReference type="EMBL" id="CP000941">
    <property type="protein sequence ID" value="ACA11513.1"/>
    <property type="molecule type" value="Genomic_DNA"/>
</dbReference>
<dbReference type="RefSeq" id="WP_004086533.1">
    <property type="nucleotide sequence ID" value="NC_010513.1"/>
</dbReference>
<dbReference type="SMR" id="B0U5K9"/>
<dbReference type="KEGG" id="xfm:Xfasm12_0504"/>
<dbReference type="HOGENOM" id="CLU_095071_2_1_6"/>
<dbReference type="GO" id="GO:0022625">
    <property type="term" value="C:cytosolic large ribosomal subunit"/>
    <property type="evidence" value="ECO:0007669"/>
    <property type="project" value="TreeGrafter"/>
</dbReference>
<dbReference type="GO" id="GO:0070180">
    <property type="term" value="F:large ribosomal subunit rRNA binding"/>
    <property type="evidence" value="ECO:0007669"/>
    <property type="project" value="TreeGrafter"/>
</dbReference>
<dbReference type="GO" id="GO:0003735">
    <property type="term" value="F:structural constituent of ribosome"/>
    <property type="evidence" value="ECO:0007669"/>
    <property type="project" value="InterPro"/>
</dbReference>
<dbReference type="GO" id="GO:0006412">
    <property type="term" value="P:translation"/>
    <property type="evidence" value="ECO:0007669"/>
    <property type="project" value="UniProtKB-UniRule"/>
</dbReference>
<dbReference type="CDD" id="cd00337">
    <property type="entry name" value="Ribosomal_uL14"/>
    <property type="match status" value="1"/>
</dbReference>
<dbReference type="FunFam" id="2.40.150.20:FF:000001">
    <property type="entry name" value="50S ribosomal protein L14"/>
    <property type="match status" value="1"/>
</dbReference>
<dbReference type="Gene3D" id="2.40.150.20">
    <property type="entry name" value="Ribosomal protein L14"/>
    <property type="match status" value="1"/>
</dbReference>
<dbReference type="HAMAP" id="MF_01367">
    <property type="entry name" value="Ribosomal_uL14"/>
    <property type="match status" value="1"/>
</dbReference>
<dbReference type="InterPro" id="IPR000218">
    <property type="entry name" value="Ribosomal_uL14"/>
</dbReference>
<dbReference type="InterPro" id="IPR005745">
    <property type="entry name" value="Ribosomal_uL14_bac-type"/>
</dbReference>
<dbReference type="InterPro" id="IPR019972">
    <property type="entry name" value="Ribosomal_uL14_CS"/>
</dbReference>
<dbReference type="InterPro" id="IPR036853">
    <property type="entry name" value="Ribosomal_uL14_sf"/>
</dbReference>
<dbReference type="NCBIfam" id="TIGR01067">
    <property type="entry name" value="rplN_bact"/>
    <property type="match status" value="1"/>
</dbReference>
<dbReference type="PANTHER" id="PTHR11761">
    <property type="entry name" value="50S/60S RIBOSOMAL PROTEIN L14/L23"/>
    <property type="match status" value="1"/>
</dbReference>
<dbReference type="PANTHER" id="PTHR11761:SF3">
    <property type="entry name" value="LARGE RIBOSOMAL SUBUNIT PROTEIN UL14M"/>
    <property type="match status" value="1"/>
</dbReference>
<dbReference type="Pfam" id="PF00238">
    <property type="entry name" value="Ribosomal_L14"/>
    <property type="match status" value="1"/>
</dbReference>
<dbReference type="SMART" id="SM01374">
    <property type="entry name" value="Ribosomal_L14"/>
    <property type="match status" value="1"/>
</dbReference>
<dbReference type="SUPFAM" id="SSF50193">
    <property type="entry name" value="Ribosomal protein L14"/>
    <property type="match status" value="1"/>
</dbReference>
<dbReference type="PROSITE" id="PS00049">
    <property type="entry name" value="RIBOSOMAL_L14"/>
    <property type="match status" value="1"/>
</dbReference>
<name>RL14_XYLFM</name>